<feature type="chain" id="PRO_1000080754" description="Transcriptional repressor NrdR">
    <location>
        <begin position="1"/>
        <end position="178"/>
    </location>
</feature>
<feature type="domain" description="ATP-cone" evidence="1">
    <location>
        <begin position="49"/>
        <end position="139"/>
    </location>
</feature>
<feature type="zinc finger region" evidence="1">
    <location>
        <begin position="3"/>
        <end position="34"/>
    </location>
</feature>
<feature type="region of interest" description="Disordered" evidence="2">
    <location>
        <begin position="1"/>
        <end position="21"/>
    </location>
</feature>
<feature type="compositionally biased region" description="Basic and acidic residues" evidence="2">
    <location>
        <begin position="7"/>
        <end position="21"/>
    </location>
</feature>
<protein>
    <recommendedName>
        <fullName evidence="1">Transcriptional repressor NrdR</fullName>
    </recommendedName>
</protein>
<evidence type="ECO:0000255" key="1">
    <source>
        <dbReference type="HAMAP-Rule" id="MF_00440"/>
    </source>
</evidence>
<evidence type="ECO:0000256" key="2">
    <source>
        <dbReference type="SAM" id="MobiDB-lite"/>
    </source>
</evidence>
<comment type="function">
    <text evidence="1">Negatively regulates transcription of bacterial ribonucleotide reductase nrd genes and operons by binding to NrdR-boxes.</text>
</comment>
<comment type="cofactor">
    <cofactor evidence="1">
        <name>Zn(2+)</name>
        <dbReference type="ChEBI" id="CHEBI:29105"/>
    </cofactor>
    <text evidence="1">Binds 1 zinc ion.</text>
</comment>
<comment type="similarity">
    <text evidence="1">Belongs to the NrdR family.</text>
</comment>
<accession>A9HHY9</accession>
<accession>B5ZD33</accession>
<name>NRDR_GLUDA</name>
<reference key="1">
    <citation type="journal article" date="2009" name="BMC Genomics">
        <title>Complete genome sequence of the sugarcane nitrogen-fixing endophyte Gluconacetobacter diazotrophicus Pal5.</title>
        <authorList>
            <person name="Bertalan M."/>
            <person name="Albano R."/>
            <person name="de Padua V."/>
            <person name="Rouws L."/>
            <person name="Rojas C."/>
            <person name="Hemerly A."/>
            <person name="Teixeira K."/>
            <person name="Schwab S."/>
            <person name="Araujo J."/>
            <person name="Oliveira A."/>
            <person name="Franca L."/>
            <person name="Magalhaes V."/>
            <person name="Alqueres S."/>
            <person name="Cardoso A."/>
            <person name="Almeida W."/>
            <person name="Loureiro M.M."/>
            <person name="Nogueira E."/>
            <person name="Cidade D."/>
            <person name="Oliveira D."/>
            <person name="Simao T."/>
            <person name="Macedo J."/>
            <person name="Valadao A."/>
            <person name="Dreschsel M."/>
            <person name="Freitas F."/>
            <person name="Vidal M."/>
            <person name="Guedes H."/>
            <person name="Rodrigues E."/>
            <person name="Meneses C."/>
            <person name="Brioso P."/>
            <person name="Pozzer L."/>
            <person name="Figueiredo D."/>
            <person name="Montano H."/>
            <person name="Junior J."/>
            <person name="de Souza Filho G."/>
            <person name="Martin Quintana Flores V."/>
            <person name="Ferreira B."/>
            <person name="Branco A."/>
            <person name="Gonzalez P."/>
            <person name="Guillobel H."/>
            <person name="Lemos M."/>
            <person name="Seibel L."/>
            <person name="Macedo J."/>
            <person name="Alves-Ferreira M."/>
            <person name="Sachetto-Martins G."/>
            <person name="Coelho A."/>
            <person name="Santos E."/>
            <person name="Amaral G."/>
            <person name="Neves A."/>
            <person name="Pacheco A.B."/>
            <person name="Carvalho D."/>
            <person name="Lery L."/>
            <person name="Bisch P."/>
            <person name="Rossle S.C."/>
            <person name="Urmenyi T."/>
            <person name="Rael Pereira A."/>
            <person name="Silva R."/>
            <person name="Rondinelli E."/>
            <person name="von Kruger W."/>
            <person name="Martins O."/>
            <person name="Baldani J.I."/>
            <person name="Ferreira P.C."/>
        </authorList>
    </citation>
    <scope>NUCLEOTIDE SEQUENCE [LARGE SCALE GENOMIC DNA]</scope>
    <source>
        <strain>ATCC 49037 / DSM 5601 / CCUG 37298 / CIP 103539 / LMG 7603 / PAl5</strain>
    </source>
</reference>
<reference key="2">
    <citation type="journal article" date="2010" name="Stand. Genomic Sci.">
        <title>Two genome sequences of the same bacterial strain, Gluconacetobacter diazotrophicus PAl 5, suggest a new standard in genome sequence submission.</title>
        <authorList>
            <person name="Giongo A."/>
            <person name="Tyler H.L."/>
            <person name="Zipperer U.N."/>
            <person name="Triplett E.W."/>
        </authorList>
    </citation>
    <scope>NUCLEOTIDE SEQUENCE [LARGE SCALE GENOMIC DNA]</scope>
    <source>
        <strain>ATCC 49037 / DSM 5601 / CCUG 37298 / CIP 103539 / LMG 7603 / PAl5</strain>
    </source>
</reference>
<proteinExistence type="inferred from homology"/>
<keyword id="KW-0067">ATP-binding</keyword>
<keyword id="KW-0238">DNA-binding</keyword>
<keyword id="KW-0479">Metal-binding</keyword>
<keyword id="KW-0547">Nucleotide-binding</keyword>
<keyword id="KW-1185">Reference proteome</keyword>
<keyword id="KW-0678">Repressor</keyword>
<keyword id="KW-0804">Transcription</keyword>
<keyword id="KW-0805">Transcription regulation</keyword>
<keyword id="KW-0862">Zinc</keyword>
<keyword id="KW-0863">Zinc-finger</keyword>
<dbReference type="EMBL" id="AM889285">
    <property type="protein sequence ID" value="CAP55698.1"/>
    <property type="molecule type" value="Genomic_DNA"/>
</dbReference>
<dbReference type="EMBL" id="CP001189">
    <property type="protein sequence ID" value="ACI53258.1"/>
    <property type="molecule type" value="Genomic_DNA"/>
</dbReference>
<dbReference type="RefSeq" id="WP_012225266.1">
    <property type="nucleotide sequence ID" value="NC_010125.1"/>
</dbReference>
<dbReference type="SMR" id="A9HHY9"/>
<dbReference type="STRING" id="272568.GDI1755"/>
<dbReference type="KEGG" id="gdi:GDI1755"/>
<dbReference type="KEGG" id="gdj:Gdia_3535"/>
<dbReference type="eggNOG" id="COG1327">
    <property type="taxonomic scope" value="Bacteria"/>
</dbReference>
<dbReference type="HOGENOM" id="CLU_108412_0_1_5"/>
<dbReference type="OrthoDB" id="9807461at2"/>
<dbReference type="Proteomes" id="UP000001176">
    <property type="component" value="Chromosome"/>
</dbReference>
<dbReference type="GO" id="GO:0005524">
    <property type="term" value="F:ATP binding"/>
    <property type="evidence" value="ECO:0007669"/>
    <property type="project" value="UniProtKB-KW"/>
</dbReference>
<dbReference type="GO" id="GO:0003677">
    <property type="term" value="F:DNA binding"/>
    <property type="evidence" value="ECO:0007669"/>
    <property type="project" value="UniProtKB-KW"/>
</dbReference>
<dbReference type="GO" id="GO:0008270">
    <property type="term" value="F:zinc ion binding"/>
    <property type="evidence" value="ECO:0007669"/>
    <property type="project" value="UniProtKB-UniRule"/>
</dbReference>
<dbReference type="GO" id="GO:0045892">
    <property type="term" value="P:negative regulation of DNA-templated transcription"/>
    <property type="evidence" value="ECO:0007669"/>
    <property type="project" value="UniProtKB-UniRule"/>
</dbReference>
<dbReference type="HAMAP" id="MF_00440">
    <property type="entry name" value="NrdR"/>
    <property type="match status" value="1"/>
</dbReference>
<dbReference type="InterPro" id="IPR005144">
    <property type="entry name" value="ATP-cone_dom"/>
</dbReference>
<dbReference type="InterPro" id="IPR055173">
    <property type="entry name" value="NrdR-like_N"/>
</dbReference>
<dbReference type="InterPro" id="IPR003796">
    <property type="entry name" value="RNR_NrdR-like"/>
</dbReference>
<dbReference type="NCBIfam" id="TIGR00244">
    <property type="entry name" value="transcriptional regulator NrdR"/>
    <property type="match status" value="1"/>
</dbReference>
<dbReference type="PANTHER" id="PTHR30455">
    <property type="entry name" value="TRANSCRIPTIONAL REPRESSOR NRDR"/>
    <property type="match status" value="1"/>
</dbReference>
<dbReference type="PANTHER" id="PTHR30455:SF2">
    <property type="entry name" value="TRANSCRIPTIONAL REPRESSOR NRDR"/>
    <property type="match status" value="1"/>
</dbReference>
<dbReference type="Pfam" id="PF03477">
    <property type="entry name" value="ATP-cone"/>
    <property type="match status" value="1"/>
</dbReference>
<dbReference type="Pfam" id="PF22811">
    <property type="entry name" value="Zn_ribbon_NrdR"/>
    <property type="match status" value="1"/>
</dbReference>
<dbReference type="PROSITE" id="PS51161">
    <property type="entry name" value="ATP_CONE"/>
    <property type="match status" value="1"/>
</dbReference>
<gene>
    <name evidence="1" type="primary">nrdR</name>
    <name type="ordered locus">GDI1755</name>
    <name type="ordered locus">Gdia_3535</name>
</gene>
<organism>
    <name type="scientific">Gluconacetobacter diazotrophicus (strain ATCC 49037 / DSM 5601 / CCUG 37298 / CIP 103539 / LMG 7603 / PAl5)</name>
    <dbReference type="NCBI Taxonomy" id="272568"/>
    <lineage>
        <taxon>Bacteria</taxon>
        <taxon>Pseudomonadati</taxon>
        <taxon>Pseudomonadota</taxon>
        <taxon>Alphaproteobacteria</taxon>
        <taxon>Acetobacterales</taxon>
        <taxon>Acetobacteraceae</taxon>
        <taxon>Gluconacetobacter</taxon>
    </lineage>
</organism>
<sequence>MRCPFCGHEDTQVKDSRPHEDGAAIRRRRICAACSQRFTTIERVQLRDLYVVKADDRRVPFERDKLARSVRIALRKRPVDEERIERIVNGLVRQLEASGETDIPSRDIGKLVMGTLREVDIVAYIRFASVHWDFRETKDFAAILQSIPGTADGDVPVVPGDAAAAIAAESGPGGVKRR</sequence>